<evidence type="ECO:0000250" key="1"/>
<evidence type="ECO:0000250" key="2">
    <source>
        <dbReference type="UniProtKB" id="Q5T1C6"/>
    </source>
</evidence>
<evidence type="ECO:0000255" key="3"/>
<evidence type="ECO:0000305" key="4"/>
<comment type="function">
    <text evidence="2">Has acyl-CoA thioesterase activity towards medium and long-chain (C14 to C18) fatty acyl-CoA substrates, and probably plays a role in mitochondrial fatty acid metabolism.</text>
</comment>
<comment type="catalytic activity">
    <reaction evidence="2">
        <text>hexadecanoyl-CoA + H2O = hexadecanoate + CoA + H(+)</text>
        <dbReference type="Rhea" id="RHEA:16645"/>
        <dbReference type="ChEBI" id="CHEBI:7896"/>
        <dbReference type="ChEBI" id="CHEBI:15377"/>
        <dbReference type="ChEBI" id="CHEBI:15378"/>
        <dbReference type="ChEBI" id="CHEBI:57287"/>
        <dbReference type="ChEBI" id="CHEBI:57379"/>
        <dbReference type="EC" id="3.1.2.2"/>
    </reaction>
    <physiologicalReaction direction="left-to-right" evidence="2">
        <dbReference type="Rhea" id="RHEA:16646"/>
    </physiologicalReaction>
</comment>
<comment type="catalytic activity">
    <reaction evidence="2">
        <text>octanoyl-CoA + H2O = octanoate + CoA + H(+)</text>
        <dbReference type="Rhea" id="RHEA:30143"/>
        <dbReference type="ChEBI" id="CHEBI:15377"/>
        <dbReference type="ChEBI" id="CHEBI:15378"/>
        <dbReference type="ChEBI" id="CHEBI:25646"/>
        <dbReference type="ChEBI" id="CHEBI:57287"/>
        <dbReference type="ChEBI" id="CHEBI:57386"/>
    </reaction>
    <physiologicalReaction direction="left-to-right" evidence="2">
        <dbReference type="Rhea" id="RHEA:30144"/>
    </physiologicalReaction>
</comment>
<comment type="catalytic activity">
    <reaction evidence="2">
        <text>decanoyl-CoA + H2O = decanoate + CoA + H(+)</text>
        <dbReference type="Rhea" id="RHEA:40059"/>
        <dbReference type="ChEBI" id="CHEBI:15377"/>
        <dbReference type="ChEBI" id="CHEBI:15378"/>
        <dbReference type="ChEBI" id="CHEBI:27689"/>
        <dbReference type="ChEBI" id="CHEBI:57287"/>
        <dbReference type="ChEBI" id="CHEBI:61430"/>
    </reaction>
    <physiologicalReaction direction="left-to-right" evidence="2">
        <dbReference type="Rhea" id="RHEA:40060"/>
    </physiologicalReaction>
</comment>
<comment type="catalytic activity">
    <reaction evidence="2">
        <text>dodecanoyl-CoA + H2O = dodecanoate + CoA + H(+)</text>
        <dbReference type="Rhea" id="RHEA:30135"/>
        <dbReference type="ChEBI" id="CHEBI:15377"/>
        <dbReference type="ChEBI" id="CHEBI:15378"/>
        <dbReference type="ChEBI" id="CHEBI:18262"/>
        <dbReference type="ChEBI" id="CHEBI:57287"/>
        <dbReference type="ChEBI" id="CHEBI:57375"/>
    </reaction>
    <physiologicalReaction direction="left-to-right" evidence="2">
        <dbReference type="Rhea" id="RHEA:30136"/>
    </physiologicalReaction>
</comment>
<comment type="catalytic activity">
    <reaction evidence="2">
        <text>tetradecanoyl-CoA + H2O = tetradecanoate + CoA + H(+)</text>
        <dbReference type="Rhea" id="RHEA:40119"/>
        <dbReference type="ChEBI" id="CHEBI:15377"/>
        <dbReference type="ChEBI" id="CHEBI:15378"/>
        <dbReference type="ChEBI" id="CHEBI:30807"/>
        <dbReference type="ChEBI" id="CHEBI:57287"/>
        <dbReference type="ChEBI" id="CHEBI:57385"/>
    </reaction>
    <physiologicalReaction direction="left-to-right" evidence="2">
        <dbReference type="Rhea" id="RHEA:40120"/>
    </physiologicalReaction>
</comment>
<comment type="catalytic activity">
    <reaction evidence="2">
        <text>(9Z)-octadecenoyl-CoA + H2O = (9Z)-octadecenoate + CoA + H(+)</text>
        <dbReference type="Rhea" id="RHEA:40139"/>
        <dbReference type="ChEBI" id="CHEBI:15377"/>
        <dbReference type="ChEBI" id="CHEBI:15378"/>
        <dbReference type="ChEBI" id="CHEBI:30823"/>
        <dbReference type="ChEBI" id="CHEBI:57287"/>
        <dbReference type="ChEBI" id="CHEBI:57387"/>
    </reaction>
    <physiologicalReaction direction="left-to-right" evidence="2">
        <dbReference type="Rhea" id="RHEA:40140"/>
    </physiologicalReaction>
</comment>
<comment type="catalytic activity">
    <reaction evidence="2">
        <text>(5Z,8Z,11Z,14Z)-eicosatetraenoyl-CoA + H2O = (5Z,8Z,11Z,14Z)-eicosatetraenoate + CoA + H(+)</text>
        <dbReference type="Rhea" id="RHEA:40151"/>
        <dbReference type="ChEBI" id="CHEBI:15377"/>
        <dbReference type="ChEBI" id="CHEBI:15378"/>
        <dbReference type="ChEBI" id="CHEBI:32395"/>
        <dbReference type="ChEBI" id="CHEBI:57287"/>
        <dbReference type="ChEBI" id="CHEBI:57368"/>
    </reaction>
    <physiologicalReaction direction="left-to-right" evidence="2">
        <dbReference type="Rhea" id="RHEA:40152"/>
    </physiologicalReaction>
</comment>
<comment type="subcellular location">
    <subcellularLocation>
        <location evidence="2">Cell membrane</location>
    </subcellularLocation>
    <subcellularLocation>
        <location evidence="2">Cell projection</location>
        <location evidence="2">Ruffle membrane</location>
    </subcellularLocation>
    <subcellularLocation>
        <location evidence="2">Cytoplasm</location>
    </subcellularLocation>
    <subcellularLocation>
        <location evidence="2">Mitochondrion</location>
    </subcellularLocation>
    <subcellularLocation>
        <location evidence="2">Mitochondrion inner membrane</location>
        <topology evidence="2">Peripheral membrane protein</topology>
    </subcellularLocation>
    <subcellularLocation>
        <location evidence="2">Mitochondrion intermembrane space</location>
    </subcellularLocation>
    <text evidence="2">Released from the mitochondria into the cytosol in response to apoptotic stimuli.</text>
</comment>
<comment type="similarity">
    <text evidence="4">Belongs to the THEM4/THEM5 thioesterase family.</text>
</comment>
<name>THEM4_XENLA</name>
<protein>
    <recommendedName>
        <fullName>Acyl-coenzyme A thioesterase THEM4</fullName>
        <shortName>Acyl-CoA thioesterase THEM4</shortName>
        <ecNumber evidence="2">3.1.2.2</ecNumber>
    </recommendedName>
    <alternativeName>
        <fullName>Thioesterase superfamily member 4</fullName>
    </alternativeName>
</protein>
<accession>Q6GLK2</accession>
<dbReference type="EC" id="3.1.2.2" evidence="2"/>
<dbReference type="EMBL" id="BC074478">
    <property type="protein sequence ID" value="AAH74478.1"/>
    <property type="molecule type" value="mRNA"/>
</dbReference>
<dbReference type="SMR" id="Q6GLK2"/>
<dbReference type="AGR" id="Xenbase:XB-GENE-6251900"/>
<dbReference type="Xenbase" id="XB-GENE-6251900">
    <property type="gene designation" value="them4.L"/>
</dbReference>
<dbReference type="Proteomes" id="UP000186698">
    <property type="component" value="Unplaced"/>
</dbReference>
<dbReference type="GO" id="GO:0005743">
    <property type="term" value="C:mitochondrial inner membrane"/>
    <property type="evidence" value="ECO:0007669"/>
    <property type="project" value="UniProtKB-SubCell"/>
</dbReference>
<dbReference type="GO" id="GO:0005758">
    <property type="term" value="C:mitochondrial intermembrane space"/>
    <property type="evidence" value="ECO:0007669"/>
    <property type="project" value="UniProtKB-SubCell"/>
</dbReference>
<dbReference type="GO" id="GO:0032587">
    <property type="term" value="C:ruffle membrane"/>
    <property type="evidence" value="ECO:0007669"/>
    <property type="project" value="UniProtKB-SubCell"/>
</dbReference>
<dbReference type="GO" id="GO:0016787">
    <property type="term" value="F:hydrolase activity"/>
    <property type="evidence" value="ECO:0007669"/>
    <property type="project" value="UniProtKB-KW"/>
</dbReference>
<dbReference type="GO" id="GO:0006915">
    <property type="term" value="P:apoptotic process"/>
    <property type="evidence" value="ECO:0007669"/>
    <property type="project" value="UniProtKB-KW"/>
</dbReference>
<dbReference type="GO" id="GO:0006631">
    <property type="term" value="P:fatty acid metabolic process"/>
    <property type="evidence" value="ECO:0007669"/>
    <property type="project" value="UniProtKB-KW"/>
</dbReference>
<dbReference type="CDD" id="cd03443">
    <property type="entry name" value="PaaI_thioesterase"/>
    <property type="match status" value="1"/>
</dbReference>
<dbReference type="Gene3D" id="3.10.129.10">
    <property type="entry name" value="Hotdog Thioesterase"/>
    <property type="match status" value="1"/>
</dbReference>
<dbReference type="InterPro" id="IPR029069">
    <property type="entry name" value="HotDog_dom_sf"/>
</dbReference>
<dbReference type="InterPro" id="IPR052365">
    <property type="entry name" value="THEM4/THEM5_acyl-CoA_thioest"/>
</dbReference>
<dbReference type="InterPro" id="IPR006683">
    <property type="entry name" value="Thioestr_dom"/>
</dbReference>
<dbReference type="PANTHER" id="PTHR12418">
    <property type="entry name" value="ACYL-COENZYME A THIOESTERASE THEM4"/>
    <property type="match status" value="1"/>
</dbReference>
<dbReference type="PANTHER" id="PTHR12418:SF19">
    <property type="entry name" value="ACYL-COENZYME A THIOESTERASE THEM4"/>
    <property type="match status" value="1"/>
</dbReference>
<dbReference type="Pfam" id="PF03061">
    <property type="entry name" value="4HBT"/>
    <property type="match status" value="1"/>
</dbReference>
<dbReference type="SUPFAM" id="SSF54637">
    <property type="entry name" value="Thioesterase/thiol ester dehydrase-isomerase"/>
    <property type="match status" value="1"/>
</dbReference>
<feature type="transit peptide" description="Mitochondrion" evidence="3">
    <location>
        <begin position="1"/>
        <end position="34"/>
    </location>
</feature>
<feature type="chain" id="PRO_0000314182" description="Acyl-coenzyme A thioesterase THEM4">
    <location>
        <begin position="35"/>
        <end position="222"/>
    </location>
</feature>
<feature type="active site" description="Proton donor/acceptor" evidence="2">
    <location>
        <position position="148"/>
    </location>
</feature>
<feature type="binding site" evidence="1">
    <location>
        <position position="172"/>
    </location>
    <ligand>
        <name>substrate</name>
    </ligand>
</feature>
<feature type="binding site" evidence="1">
    <location>
        <begin position="193"/>
        <end position="194"/>
    </location>
    <ligand>
        <name>substrate</name>
    </ligand>
</feature>
<reference key="1">
    <citation type="submission" date="2004-06" db="EMBL/GenBank/DDBJ databases">
        <authorList>
            <consortium name="NIH - Xenopus Gene Collection (XGC) project"/>
        </authorList>
    </citation>
    <scope>NUCLEOTIDE SEQUENCE [LARGE SCALE MRNA]</scope>
    <source>
        <tissue>Brain</tissue>
    </source>
</reference>
<sequence>MLRSCARLIYKGITLPRQQQNLHSLPCSYTAPKFYSQEAPRDYGVPNTTWSKNLLDLYNKYMEGSKSGTWKRIPSYNATVHYIKGVPPVRNREKRLFTRNLDQDGVGFEYCMFYNKAERRMVCLFQPGPYLEGPPGFTHGGCIATMIDSTTGAGAVYLCGGVMTANLTVDYKNPIPLGCVVIIDSKVEKIEGRKVFTSCQIRSHDDSMLHTEATALFIKLCP</sequence>
<proteinExistence type="evidence at transcript level"/>
<organism>
    <name type="scientific">Xenopus laevis</name>
    <name type="common">African clawed frog</name>
    <dbReference type="NCBI Taxonomy" id="8355"/>
    <lineage>
        <taxon>Eukaryota</taxon>
        <taxon>Metazoa</taxon>
        <taxon>Chordata</taxon>
        <taxon>Craniata</taxon>
        <taxon>Vertebrata</taxon>
        <taxon>Euteleostomi</taxon>
        <taxon>Amphibia</taxon>
        <taxon>Batrachia</taxon>
        <taxon>Anura</taxon>
        <taxon>Pipoidea</taxon>
        <taxon>Pipidae</taxon>
        <taxon>Xenopodinae</taxon>
        <taxon>Xenopus</taxon>
        <taxon>Xenopus</taxon>
    </lineage>
</organism>
<gene>
    <name type="primary">them4</name>
</gene>
<keyword id="KW-0053">Apoptosis</keyword>
<keyword id="KW-1003">Cell membrane</keyword>
<keyword id="KW-0966">Cell projection</keyword>
<keyword id="KW-0963">Cytoplasm</keyword>
<keyword id="KW-0276">Fatty acid metabolism</keyword>
<keyword id="KW-0378">Hydrolase</keyword>
<keyword id="KW-0443">Lipid metabolism</keyword>
<keyword id="KW-0472">Membrane</keyword>
<keyword id="KW-0496">Mitochondrion</keyword>
<keyword id="KW-0999">Mitochondrion inner membrane</keyword>
<keyword id="KW-1185">Reference proteome</keyword>
<keyword id="KW-0809">Transit peptide</keyword>